<gene>
    <name evidence="1" type="primary">leuD</name>
    <name type="ordered locus">APJL_0139</name>
</gene>
<reference key="1">
    <citation type="journal article" date="2008" name="PLoS ONE">
        <title>Genome biology of Actinobacillus pleuropneumoniae JL03, an isolate of serotype 3 prevalent in China.</title>
        <authorList>
            <person name="Xu Z."/>
            <person name="Zhou Y."/>
            <person name="Li L."/>
            <person name="Zhou R."/>
            <person name="Xiao S."/>
            <person name="Wan Y."/>
            <person name="Zhang S."/>
            <person name="Wang K."/>
            <person name="Li W."/>
            <person name="Li L."/>
            <person name="Jin H."/>
            <person name="Kang M."/>
            <person name="Dalai B."/>
            <person name="Li T."/>
            <person name="Liu L."/>
            <person name="Cheng Y."/>
            <person name="Zhang L."/>
            <person name="Xu T."/>
            <person name="Zheng H."/>
            <person name="Pu S."/>
            <person name="Wang B."/>
            <person name="Gu W."/>
            <person name="Zhang X.L."/>
            <person name="Zhu G.-F."/>
            <person name="Wang S."/>
            <person name="Zhao G.-P."/>
            <person name="Chen H."/>
        </authorList>
    </citation>
    <scope>NUCLEOTIDE SEQUENCE [LARGE SCALE GENOMIC DNA]</scope>
    <source>
        <strain>JL03</strain>
    </source>
</reference>
<feature type="chain" id="PRO_1000135784" description="3-isopropylmalate dehydratase small subunit">
    <location>
        <begin position="1"/>
        <end position="200"/>
    </location>
</feature>
<dbReference type="EC" id="4.2.1.33" evidence="1"/>
<dbReference type="EMBL" id="CP000687">
    <property type="protein sequence ID" value="ABY68743.1"/>
    <property type="molecule type" value="Genomic_DNA"/>
</dbReference>
<dbReference type="RefSeq" id="WP_005595839.1">
    <property type="nucleotide sequence ID" value="NC_010278.1"/>
</dbReference>
<dbReference type="SMR" id="B0BS43"/>
<dbReference type="GeneID" id="48598285"/>
<dbReference type="KEGG" id="apj:APJL_0139"/>
<dbReference type="HOGENOM" id="CLU_081378_0_3_6"/>
<dbReference type="UniPathway" id="UPA00048">
    <property type="reaction ID" value="UER00071"/>
</dbReference>
<dbReference type="Proteomes" id="UP000008547">
    <property type="component" value="Chromosome"/>
</dbReference>
<dbReference type="GO" id="GO:0009316">
    <property type="term" value="C:3-isopropylmalate dehydratase complex"/>
    <property type="evidence" value="ECO:0007669"/>
    <property type="project" value="InterPro"/>
</dbReference>
<dbReference type="GO" id="GO:0003861">
    <property type="term" value="F:3-isopropylmalate dehydratase activity"/>
    <property type="evidence" value="ECO:0007669"/>
    <property type="project" value="UniProtKB-UniRule"/>
</dbReference>
<dbReference type="GO" id="GO:0009098">
    <property type="term" value="P:L-leucine biosynthetic process"/>
    <property type="evidence" value="ECO:0007669"/>
    <property type="project" value="UniProtKB-UniRule"/>
</dbReference>
<dbReference type="CDD" id="cd01577">
    <property type="entry name" value="IPMI_Swivel"/>
    <property type="match status" value="1"/>
</dbReference>
<dbReference type="FunFam" id="3.20.19.10:FF:000003">
    <property type="entry name" value="3-isopropylmalate dehydratase small subunit"/>
    <property type="match status" value="1"/>
</dbReference>
<dbReference type="Gene3D" id="3.20.19.10">
    <property type="entry name" value="Aconitase, domain 4"/>
    <property type="match status" value="1"/>
</dbReference>
<dbReference type="HAMAP" id="MF_01031">
    <property type="entry name" value="LeuD_type1"/>
    <property type="match status" value="1"/>
</dbReference>
<dbReference type="InterPro" id="IPR004431">
    <property type="entry name" value="3-IsopropMal_deHydase_ssu"/>
</dbReference>
<dbReference type="InterPro" id="IPR015928">
    <property type="entry name" value="Aconitase/3IPM_dehydase_swvl"/>
</dbReference>
<dbReference type="InterPro" id="IPR000573">
    <property type="entry name" value="AconitaseA/IPMdHydase_ssu_swvl"/>
</dbReference>
<dbReference type="InterPro" id="IPR033940">
    <property type="entry name" value="IPMI_Swivel"/>
</dbReference>
<dbReference type="InterPro" id="IPR050075">
    <property type="entry name" value="LeuD"/>
</dbReference>
<dbReference type="NCBIfam" id="TIGR00171">
    <property type="entry name" value="leuD"/>
    <property type="match status" value="1"/>
</dbReference>
<dbReference type="NCBIfam" id="NF002458">
    <property type="entry name" value="PRK01641.1"/>
    <property type="match status" value="1"/>
</dbReference>
<dbReference type="PANTHER" id="PTHR43345:SF5">
    <property type="entry name" value="3-ISOPROPYLMALATE DEHYDRATASE SMALL SUBUNIT"/>
    <property type="match status" value="1"/>
</dbReference>
<dbReference type="PANTHER" id="PTHR43345">
    <property type="entry name" value="3-ISOPROPYLMALATE DEHYDRATASE SMALL SUBUNIT 2-RELATED-RELATED"/>
    <property type="match status" value="1"/>
</dbReference>
<dbReference type="Pfam" id="PF00694">
    <property type="entry name" value="Aconitase_C"/>
    <property type="match status" value="1"/>
</dbReference>
<dbReference type="SUPFAM" id="SSF52016">
    <property type="entry name" value="LeuD/IlvD-like"/>
    <property type="match status" value="1"/>
</dbReference>
<accession>B0BS43</accession>
<name>LEUD_ACTPJ</name>
<sequence>MAGLKQHSGLVVPLDAANVDTDAIIPKQFLQAITRVGFGKHLFHEWRYLDAEETQLNPDFVLNFPQYQGATILLARKNLGCGSSREHAPWALADYGFKVMIAPSFADIFYNNSLNNHMLPIRLSEEEVEEIFQWVWANEGKQIHIDLEAMTVTVGDKIYRFELDEFRRHCLLNGLDNIGLTLQHEDAITAYESKIPAFLR</sequence>
<comment type="function">
    <text evidence="1">Catalyzes the isomerization between 2-isopropylmalate and 3-isopropylmalate, via the formation of 2-isopropylmaleate.</text>
</comment>
<comment type="catalytic activity">
    <reaction evidence="1">
        <text>(2R,3S)-3-isopropylmalate = (2S)-2-isopropylmalate</text>
        <dbReference type="Rhea" id="RHEA:32287"/>
        <dbReference type="ChEBI" id="CHEBI:1178"/>
        <dbReference type="ChEBI" id="CHEBI:35121"/>
        <dbReference type="EC" id="4.2.1.33"/>
    </reaction>
</comment>
<comment type="pathway">
    <text evidence="1">Amino-acid biosynthesis; L-leucine biosynthesis; L-leucine from 3-methyl-2-oxobutanoate: step 2/4.</text>
</comment>
<comment type="subunit">
    <text evidence="1">Heterodimer of LeuC and LeuD.</text>
</comment>
<comment type="similarity">
    <text evidence="1">Belongs to the LeuD family. LeuD type 1 subfamily.</text>
</comment>
<evidence type="ECO:0000255" key="1">
    <source>
        <dbReference type="HAMAP-Rule" id="MF_01031"/>
    </source>
</evidence>
<protein>
    <recommendedName>
        <fullName evidence="1">3-isopropylmalate dehydratase small subunit</fullName>
        <ecNumber evidence="1">4.2.1.33</ecNumber>
    </recommendedName>
    <alternativeName>
        <fullName evidence="1">Alpha-IPM isomerase</fullName>
        <shortName evidence="1">IPMI</shortName>
    </alternativeName>
    <alternativeName>
        <fullName evidence="1">Isopropylmalate isomerase</fullName>
    </alternativeName>
</protein>
<proteinExistence type="inferred from homology"/>
<organism>
    <name type="scientific">Actinobacillus pleuropneumoniae serotype 3 (strain JL03)</name>
    <dbReference type="NCBI Taxonomy" id="434271"/>
    <lineage>
        <taxon>Bacteria</taxon>
        <taxon>Pseudomonadati</taxon>
        <taxon>Pseudomonadota</taxon>
        <taxon>Gammaproteobacteria</taxon>
        <taxon>Pasteurellales</taxon>
        <taxon>Pasteurellaceae</taxon>
        <taxon>Actinobacillus</taxon>
    </lineage>
</organism>
<keyword id="KW-0028">Amino-acid biosynthesis</keyword>
<keyword id="KW-0100">Branched-chain amino acid biosynthesis</keyword>
<keyword id="KW-0432">Leucine biosynthesis</keyword>
<keyword id="KW-0456">Lyase</keyword>